<proteinExistence type="inferred from homology"/>
<gene>
    <name evidence="1" type="primary">rimM</name>
    <name type="ordered locus">BAD_0207</name>
</gene>
<keyword id="KW-0143">Chaperone</keyword>
<keyword id="KW-0963">Cytoplasm</keyword>
<keyword id="KW-1185">Reference proteome</keyword>
<keyword id="KW-0690">Ribosome biogenesis</keyword>
<keyword id="KW-0698">rRNA processing</keyword>
<reference key="1">
    <citation type="submission" date="2006-12" db="EMBL/GenBank/DDBJ databases">
        <title>Bifidobacterium adolescentis complete genome sequence.</title>
        <authorList>
            <person name="Suzuki T."/>
            <person name="Tsuda Y."/>
            <person name="Kanou N."/>
            <person name="Inoue T."/>
            <person name="Kumazaki K."/>
            <person name="Nagano S."/>
            <person name="Hirai S."/>
            <person name="Tanaka K."/>
            <person name="Watanabe K."/>
        </authorList>
    </citation>
    <scope>NUCLEOTIDE SEQUENCE [LARGE SCALE GENOMIC DNA]</scope>
    <source>
        <strain>ATCC 15703 / DSM 20083 / NCTC 11814 / E194a</strain>
    </source>
</reference>
<comment type="function">
    <text evidence="1">An accessory protein needed during the final step in the assembly of 30S ribosomal subunit, possibly for assembly of the head region. Essential for efficient processing of 16S rRNA. May be needed both before and after RbfA during the maturation of 16S rRNA. It has affinity for free ribosomal 30S subunits but not for 70S ribosomes.</text>
</comment>
<comment type="subunit">
    <text evidence="1">Binds ribosomal protein uS19.</text>
</comment>
<comment type="subcellular location">
    <subcellularLocation>
        <location evidence="1">Cytoplasm</location>
    </subcellularLocation>
</comment>
<comment type="domain">
    <text evidence="1">The PRC barrel domain binds ribosomal protein uS19.</text>
</comment>
<comment type="similarity">
    <text evidence="1">Belongs to the RimM family.</text>
</comment>
<sequence length="195" mass="21411">MHSDDPQQLELLRVCRIGRAQGLKGEVTVQIFTDEPEYRFAPGAVLYTKDGEEEYVVESSRTFKNRWIIKFEGIDDRDASEAANGVVLYGEADDPEEMLEADEWYPKDLISLEARLAEGNTLGLAPGTVVGKVVDVIEVAQWLLKIRLANPVKDADGVVVENSALVPFVDELVPDIDLEGGYLTLDPPGGLIPGL</sequence>
<protein>
    <recommendedName>
        <fullName evidence="1">Ribosome maturation factor RimM</fullName>
    </recommendedName>
</protein>
<dbReference type="EMBL" id="AP009256">
    <property type="protein sequence ID" value="BAF38988.1"/>
    <property type="molecule type" value="Genomic_DNA"/>
</dbReference>
<dbReference type="RefSeq" id="WP_003807658.1">
    <property type="nucleotide sequence ID" value="NZ_CAXVNC010000001.1"/>
</dbReference>
<dbReference type="SMR" id="A0ZZV5"/>
<dbReference type="STRING" id="367928.BAD_0207"/>
<dbReference type="PaxDb" id="1680-BADO_0215"/>
<dbReference type="GeneID" id="4557584"/>
<dbReference type="KEGG" id="bad:BAD_0207"/>
<dbReference type="HOGENOM" id="CLU_077636_0_0_11"/>
<dbReference type="Proteomes" id="UP000008702">
    <property type="component" value="Chromosome"/>
</dbReference>
<dbReference type="GO" id="GO:0005737">
    <property type="term" value="C:cytoplasm"/>
    <property type="evidence" value="ECO:0007669"/>
    <property type="project" value="UniProtKB-SubCell"/>
</dbReference>
<dbReference type="GO" id="GO:0005840">
    <property type="term" value="C:ribosome"/>
    <property type="evidence" value="ECO:0007669"/>
    <property type="project" value="InterPro"/>
</dbReference>
<dbReference type="GO" id="GO:0043022">
    <property type="term" value="F:ribosome binding"/>
    <property type="evidence" value="ECO:0007669"/>
    <property type="project" value="InterPro"/>
</dbReference>
<dbReference type="GO" id="GO:0042274">
    <property type="term" value="P:ribosomal small subunit biogenesis"/>
    <property type="evidence" value="ECO:0007669"/>
    <property type="project" value="UniProtKB-UniRule"/>
</dbReference>
<dbReference type="GO" id="GO:0006364">
    <property type="term" value="P:rRNA processing"/>
    <property type="evidence" value="ECO:0007669"/>
    <property type="project" value="UniProtKB-UniRule"/>
</dbReference>
<dbReference type="Gene3D" id="2.30.30.240">
    <property type="entry name" value="PRC-barrel domain"/>
    <property type="match status" value="1"/>
</dbReference>
<dbReference type="Gene3D" id="2.40.30.60">
    <property type="entry name" value="RimM"/>
    <property type="match status" value="1"/>
</dbReference>
<dbReference type="HAMAP" id="MF_00014">
    <property type="entry name" value="Ribosome_mat_RimM"/>
    <property type="match status" value="1"/>
</dbReference>
<dbReference type="InterPro" id="IPR011033">
    <property type="entry name" value="PRC_barrel-like_sf"/>
</dbReference>
<dbReference type="InterPro" id="IPR056792">
    <property type="entry name" value="PRC_RimM"/>
</dbReference>
<dbReference type="InterPro" id="IPR011961">
    <property type="entry name" value="RimM"/>
</dbReference>
<dbReference type="InterPro" id="IPR002676">
    <property type="entry name" value="RimM_N"/>
</dbReference>
<dbReference type="InterPro" id="IPR036976">
    <property type="entry name" value="RimM_N_sf"/>
</dbReference>
<dbReference type="InterPro" id="IPR009000">
    <property type="entry name" value="Transl_B-barrel_sf"/>
</dbReference>
<dbReference type="NCBIfam" id="TIGR02273">
    <property type="entry name" value="16S_RimM"/>
    <property type="match status" value="1"/>
</dbReference>
<dbReference type="PANTHER" id="PTHR33692">
    <property type="entry name" value="RIBOSOME MATURATION FACTOR RIMM"/>
    <property type="match status" value="1"/>
</dbReference>
<dbReference type="PANTHER" id="PTHR33692:SF1">
    <property type="entry name" value="RIBOSOME MATURATION FACTOR RIMM"/>
    <property type="match status" value="1"/>
</dbReference>
<dbReference type="Pfam" id="PF24986">
    <property type="entry name" value="PRC_RimM"/>
    <property type="match status" value="1"/>
</dbReference>
<dbReference type="Pfam" id="PF01782">
    <property type="entry name" value="RimM"/>
    <property type="match status" value="1"/>
</dbReference>
<dbReference type="SUPFAM" id="SSF50346">
    <property type="entry name" value="PRC-barrel domain"/>
    <property type="match status" value="1"/>
</dbReference>
<dbReference type="SUPFAM" id="SSF50447">
    <property type="entry name" value="Translation proteins"/>
    <property type="match status" value="1"/>
</dbReference>
<feature type="chain" id="PRO_0000321716" description="Ribosome maturation factor RimM">
    <location>
        <begin position="1"/>
        <end position="195"/>
    </location>
</feature>
<feature type="domain" description="PRC barrel" evidence="1">
    <location>
        <begin position="101"/>
        <end position="191"/>
    </location>
</feature>
<evidence type="ECO:0000255" key="1">
    <source>
        <dbReference type="HAMAP-Rule" id="MF_00014"/>
    </source>
</evidence>
<organism>
    <name type="scientific">Bifidobacterium adolescentis (strain ATCC 15703 / DSM 20083 / NCTC 11814 / E194a)</name>
    <dbReference type="NCBI Taxonomy" id="367928"/>
    <lineage>
        <taxon>Bacteria</taxon>
        <taxon>Bacillati</taxon>
        <taxon>Actinomycetota</taxon>
        <taxon>Actinomycetes</taxon>
        <taxon>Bifidobacteriales</taxon>
        <taxon>Bifidobacteriaceae</taxon>
        <taxon>Bifidobacterium</taxon>
    </lineage>
</organism>
<name>RIMM_BIFAA</name>
<accession>A0ZZV5</accession>